<name>PPIB_RAT</name>
<keyword id="KW-0007">Acetylation</keyword>
<keyword id="KW-0256">Endoplasmic reticulum</keyword>
<keyword id="KW-0413">Isomerase</keyword>
<keyword id="KW-1185">Reference proteome</keyword>
<keyword id="KW-0697">Rotamase</keyword>
<keyword id="KW-0702">S-nitrosylation</keyword>
<keyword id="KW-0732">Signal</keyword>
<dbReference type="EC" id="5.2.1.8" evidence="2"/>
<dbReference type="EMBL" id="AF071225">
    <property type="protein sequence ID" value="AAC25590.1"/>
    <property type="status" value="ALT_INIT"/>
    <property type="molecule type" value="mRNA"/>
</dbReference>
<dbReference type="EMBL" id="BC061971">
    <property type="protein sequence ID" value="AAH61971.1"/>
    <property type="molecule type" value="mRNA"/>
</dbReference>
<dbReference type="PIR" id="S71547">
    <property type="entry name" value="S71547"/>
</dbReference>
<dbReference type="RefSeq" id="NP_071981.1">
    <property type="nucleotide sequence ID" value="NM_022536.2"/>
</dbReference>
<dbReference type="SMR" id="P24368"/>
<dbReference type="BioGRID" id="249051">
    <property type="interactions" value="1"/>
</dbReference>
<dbReference type="FunCoup" id="P24368">
    <property type="interactions" value="2470"/>
</dbReference>
<dbReference type="IntAct" id="P24368">
    <property type="interactions" value="8"/>
</dbReference>
<dbReference type="MINT" id="P24368"/>
<dbReference type="STRING" id="10116.ENSRNOP00000022828"/>
<dbReference type="GlyGen" id="P24368">
    <property type="glycosylation" value="1 site, 1 O-linked glycan (1 site)"/>
</dbReference>
<dbReference type="iPTMnet" id="P24368"/>
<dbReference type="PhosphoSitePlus" id="P24368"/>
<dbReference type="SwissPalm" id="P24368"/>
<dbReference type="jPOST" id="P24368"/>
<dbReference type="PaxDb" id="10116-ENSRNOP00000022828"/>
<dbReference type="Ensembl" id="ENSRNOT00000022828.8">
    <property type="protein sequence ID" value="ENSRNOP00000022828.5"/>
    <property type="gene ID" value="ENSRNOG00000016781.8"/>
</dbReference>
<dbReference type="GeneID" id="64367"/>
<dbReference type="KEGG" id="rno:64367"/>
<dbReference type="UCSC" id="RGD:620312">
    <property type="organism name" value="rat"/>
</dbReference>
<dbReference type="AGR" id="RGD:620312"/>
<dbReference type="CTD" id="5479"/>
<dbReference type="RGD" id="620312">
    <property type="gene designation" value="Ppib"/>
</dbReference>
<dbReference type="eggNOG" id="KOG0880">
    <property type="taxonomic scope" value="Eukaryota"/>
</dbReference>
<dbReference type="GeneTree" id="ENSGT00940000158007"/>
<dbReference type="HOGENOM" id="CLU_012062_4_2_1"/>
<dbReference type="InParanoid" id="P24368"/>
<dbReference type="OMA" id="ENHEITH"/>
<dbReference type="OrthoDB" id="193499at2759"/>
<dbReference type="PhylomeDB" id="P24368"/>
<dbReference type="TreeFam" id="TF354259"/>
<dbReference type="PRO" id="PR:P24368"/>
<dbReference type="Proteomes" id="UP000002494">
    <property type="component" value="Chromosome 8"/>
</dbReference>
<dbReference type="Bgee" id="ENSRNOG00000016781">
    <property type="expression patterns" value="Expressed in pancreas and 20 other cell types or tissues"/>
</dbReference>
<dbReference type="GO" id="GO:0005737">
    <property type="term" value="C:cytoplasm"/>
    <property type="evidence" value="ECO:0000318"/>
    <property type="project" value="GO_Central"/>
</dbReference>
<dbReference type="GO" id="GO:0034663">
    <property type="term" value="C:endoplasmic reticulum chaperone complex"/>
    <property type="evidence" value="ECO:0000266"/>
    <property type="project" value="RGD"/>
</dbReference>
<dbReference type="GO" id="GO:0005788">
    <property type="term" value="C:endoplasmic reticulum lumen"/>
    <property type="evidence" value="ECO:0007669"/>
    <property type="project" value="UniProtKB-SubCell"/>
</dbReference>
<dbReference type="GO" id="GO:0043231">
    <property type="term" value="C:intracellular membrane-bounded organelle"/>
    <property type="evidence" value="ECO:0000318"/>
    <property type="project" value="GO_Central"/>
</dbReference>
<dbReference type="GO" id="GO:0042470">
    <property type="term" value="C:melanosome"/>
    <property type="evidence" value="ECO:0007669"/>
    <property type="project" value="UniProtKB-SubCell"/>
</dbReference>
<dbReference type="GO" id="GO:0005654">
    <property type="term" value="C:nucleoplasm"/>
    <property type="evidence" value="ECO:0007669"/>
    <property type="project" value="Ensembl"/>
</dbReference>
<dbReference type="GO" id="GO:0048471">
    <property type="term" value="C:perinuclear region of cytoplasm"/>
    <property type="evidence" value="ECO:0000266"/>
    <property type="project" value="RGD"/>
</dbReference>
<dbReference type="GO" id="GO:0032991">
    <property type="term" value="C:protein-containing complex"/>
    <property type="evidence" value="ECO:0000250"/>
    <property type="project" value="CAFA"/>
</dbReference>
<dbReference type="GO" id="GO:0005790">
    <property type="term" value="C:smooth endoplasmic reticulum"/>
    <property type="evidence" value="ECO:0000314"/>
    <property type="project" value="UniProtKB"/>
</dbReference>
<dbReference type="GO" id="GO:0016018">
    <property type="term" value="F:cyclosporin A binding"/>
    <property type="evidence" value="ECO:0000318"/>
    <property type="project" value="GO_Central"/>
</dbReference>
<dbReference type="GO" id="GO:0003755">
    <property type="term" value="F:peptidyl-prolyl cis-trans isomerase activity"/>
    <property type="evidence" value="ECO:0000250"/>
    <property type="project" value="UniProtKB"/>
</dbReference>
<dbReference type="GO" id="GO:0070063">
    <property type="term" value="F:RNA polymerase binding"/>
    <property type="evidence" value="ECO:0000266"/>
    <property type="project" value="RGD"/>
</dbReference>
<dbReference type="GO" id="GO:0060348">
    <property type="term" value="P:bone development"/>
    <property type="evidence" value="ECO:0000266"/>
    <property type="project" value="RGD"/>
</dbReference>
<dbReference type="GO" id="GO:0061077">
    <property type="term" value="P:chaperone-mediated protein folding"/>
    <property type="evidence" value="ECO:0000250"/>
    <property type="project" value="CAFA"/>
</dbReference>
<dbReference type="GO" id="GO:0030593">
    <property type="term" value="P:neutrophil chemotaxis"/>
    <property type="evidence" value="ECO:0000266"/>
    <property type="project" value="RGD"/>
</dbReference>
<dbReference type="GO" id="GO:0051169">
    <property type="term" value="P:nuclear transport"/>
    <property type="evidence" value="ECO:0000304"/>
    <property type="project" value="RGD"/>
</dbReference>
<dbReference type="GO" id="GO:0044829">
    <property type="term" value="P:positive regulation by host of viral genome replication"/>
    <property type="evidence" value="ECO:0000266"/>
    <property type="project" value="RGD"/>
</dbReference>
<dbReference type="GO" id="GO:0044794">
    <property type="term" value="P:positive regulation by host of viral process"/>
    <property type="evidence" value="ECO:0000266"/>
    <property type="project" value="RGD"/>
</dbReference>
<dbReference type="GO" id="GO:0040018">
    <property type="term" value="P:positive regulation of multicellular organism growth"/>
    <property type="evidence" value="ECO:0000266"/>
    <property type="project" value="RGD"/>
</dbReference>
<dbReference type="GO" id="GO:0006457">
    <property type="term" value="P:protein folding"/>
    <property type="evidence" value="ECO:0000318"/>
    <property type="project" value="GO_Central"/>
</dbReference>
<dbReference type="GO" id="GO:0050821">
    <property type="term" value="P:protein stabilization"/>
    <property type="evidence" value="ECO:0000266"/>
    <property type="project" value="RGD"/>
</dbReference>
<dbReference type="CDD" id="cd01926">
    <property type="entry name" value="cyclophilin_ABH_like"/>
    <property type="match status" value="1"/>
</dbReference>
<dbReference type="FunFam" id="2.40.100.10:FF:000001">
    <property type="entry name" value="Peptidyl-prolyl cis-trans isomerase"/>
    <property type="match status" value="1"/>
</dbReference>
<dbReference type="Gene3D" id="2.40.100.10">
    <property type="entry name" value="Cyclophilin-like"/>
    <property type="match status" value="1"/>
</dbReference>
<dbReference type="InterPro" id="IPR029000">
    <property type="entry name" value="Cyclophilin-like_dom_sf"/>
</dbReference>
<dbReference type="InterPro" id="IPR020892">
    <property type="entry name" value="Cyclophilin-type_PPIase_CS"/>
</dbReference>
<dbReference type="InterPro" id="IPR002130">
    <property type="entry name" value="Cyclophilin-type_PPIase_dom"/>
</dbReference>
<dbReference type="PANTHER" id="PTHR11071">
    <property type="entry name" value="PEPTIDYL-PROLYL CIS-TRANS ISOMERASE"/>
    <property type="match status" value="1"/>
</dbReference>
<dbReference type="PANTHER" id="PTHR11071:SF477">
    <property type="entry name" value="PEPTIDYL-PROLYL CIS-TRANS ISOMERASE B"/>
    <property type="match status" value="1"/>
</dbReference>
<dbReference type="Pfam" id="PF00160">
    <property type="entry name" value="Pro_isomerase"/>
    <property type="match status" value="1"/>
</dbReference>
<dbReference type="PRINTS" id="PR00153">
    <property type="entry name" value="CSAPPISMRASE"/>
</dbReference>
<dbReference type="SUPFAM" id="SSF50891">
    <property type="entry name" value="Cyclophilin-like"/>
    <property type="match status" value="1"/>
</dbReference>
<dbReference type="PROSITE" id="PS00170">
    <property type="entry name" value="CSA_PPIASE_1"/>
    <property type="match status" value="1"/>
</dbReference>
<dbReference type="PROSITE" id="PS50072">
    <property type="entry name" value="CSA_PPIASE_2"/>
    <property type="match status" value="1"/>
</dbReference>
<sequence>MLRLSERNMKVLFAAALIVGSVVFLLLPGPSVANDKKKGPKVTVKVYFDFQIGDEPVGRVTFGLFGKTVPKTVDNFVALATGEKGFGYKNSKFHRVIKDFMIQGGDFTRGDGTGGKSIYGERFPDENFKLKHYGPGWVSMANAGKDTNGSQFFITTVKTSWLDGKHVVFGKVLEGMDVVRKVENTKTDSRDKPLKDVIIVDCGKIEVEKPFAIAKE</sequence>
<gene>
    <name type="primary">Ppib</name>
</gene>
<accession>P24368</accession>
<accession>O88541</accession>
<comment type="function">
    <text evidence="2">PPIase that catalyzes the cis-trans isomerization of proline imidic peptide bonds in oligopeptides and may therefore assist protein folding.</text>
</comment>
<comment type="catalytic activity">
    <reaction evidence="2">
        <text>[protein]-peptidylproline (omega=180) = [protein]-peptidylproline (omega=0)</text>
        <dbReference type="Rhea" id="RHEA:16237"/>
        <dbReference type="Rhea" id="RHEA-COMP:10747"/>
        <dbReference type="Rhea" id="RHEA-COMP:10748"/>
        <dbReference type="ChEBI" id="CHEBI:83833"/>
        <dbReference type="ChEBI" id="CHEBI:83834"/>
        <dbReference type="EC" id="5.2.1.8"/>
    </reaction>
</comment>
<comment type="activity regulation">
    <text evidence="2">Inhibited by cyclosporin A (CsA).</text>
</comment>
<comment type="subunit">
    <text evidence="2">Interacts with DYM. Interacts with CALR, CLGN and CANX. Part of a large chaperone multiprotein complex comprising DNAJB11, HSP90B1, HSPA5, HYOU, PDIA2, PDIA4, PDIA6, PPIB, SDF2L1, UGGT1 and very small amounts of ERP29, but not, or at very low levels, CALR nor CANX.</text>
</comment>
<comment type="interaction">
    <interactant intactId="EBI-916926">
        <id>P24368</id>
    </interactant>
    <interactant intactId="EBI-917435">
        <id>P38659</id>
        <label>Pdia4</label>
    </interactant>
    <organismsDiffer>false</organismsDiffer>
    <experiments>2</experiments>
</comment>
<comment type="subcellular location">
    <subcellularLocation>
        <location evidence="2">Endoplasmic reticulum lumen</location>
    </subcellularLocation>
    <subcellularLocation>
        <location evidence="2">Melanosome</location>
    </subcellularLocation>
</comment>
<comment type="tissue specificity">
    <text evidence="6">Widely expressed with highest levels in kidney.</text>
</comment>
<comment type="polymorphism">
    <text evidence="6">Higher levels occur in the proximal convoluted tubule of strain SHR than strain Wistar Kyoto.</text>
</comment>
<comment type="similarity">
    <text evidence="7">Belongs to the cyclophilin-type PPIase family. PPIase B subfamily.</text>
</comment>
<comment type="caution">
    <text evidence="7">It is uncertain whether Met-1 or Met-9 is the initiator.</text>
</comment>
<comment type="sequence caution" evidence="7">
    <conflict type="erroneous initiation">
        <sequence resource="EMBL-CDS" id="AAC25590"/>
    </conflict>
</comment>
<evidence type="ECO:0000250" key="1"/>
<evidence type="ECO:0000250" key="2">
    <source>
        <dbReference type="UniProtKB" id="P23284"/>
    </source>
</evidence>
<evidence type="ECO:0000250" key="3">
    <source>
        <dbReference type="UniProtKB" id="P24369"/>
    </source>
</evidence>
<evidence type="ECO:0000250" key="4">
    <source>
        <dbReference type="UniProtKB" id="Q99KR7"/>
    </source>
</evidence>
<evidence type="ECO:0000255" key="5">
    <source>
        <dbReference type="PROSITE-ProRule" id="PRU00156"/>
    </source>
</evidence>
<evidence type="ECO:0000269" key="6">
    <source>
    </source>
</evidence>
<evidence type="ECO:0000305" key="7"/>
<proteinExistence type="evidence at protein level"/>
<reference key="1">
    <citation type="journal article" date="1990" name="Kidney Int.">
        <title>Molecular cloning of a complementary DNA to rat cyclophilin-like protein mRNA.</title>
        <authorList>
            <person name="Iwai N."/>
            <person name="Inagami T."/>
        </authorList>
    </citation>
    <scope>NUCLEOTIDE SEQUENCE [MRNA]</scope>
</reference>
<reference key="2">
    <citation type="journal article" date="1992" name="J. Cell Biol.">
        <title>S-cyclophilin is retained intracellularly via a unique COOH-terminal sequence and colocalizes with the calcium storage protein calreticulin.</title>
        <authorList>
            <person name="Arber S."/>
            <person name="Krause K.-H."/>
            <person name="Caroni P."/>
        </authorList>
    </citation>
    <scope>SEQUENCE REVISION TO C-TERMINUS</scope>
</reference>
<reference key="3">
    <citation type="journal article" date="2000" name="Hypertension">
        <title>Cyclophilin B expression in renal proximal tubules of hypertensive rats.</title>
        <authorList>
            <person name="Kainer D.B."/>
            <person name="Doris P.A."/>
        </authorList>
    </citation>
    <scope>NUCLEOTIDE SEQUENCE [MRNA]</scope>
    <scope>TISSUE SPECIFICITY</scope>
    <source>
        <strain>Wistar Kyoto</strain>
        <tissue>Kidney</tissue>
    </source>
</reference>
<reference key="4">
    <citation type="journal article" date="2004" name="Genome Res.">
        <title>The status, quality, and expansion of the NIH full-length cDNA project: the Mammalian Gene Collection (MGC).</title>
        <authorList>
            <consortium name="The MGC Project Team"/>
        </authorList>
    </citation>
    <scope>NUCLEOTIDE SEQUENCE [LARGE SCALE MRNA]</scope>
    <source>
        <tissue>Prostate</tissue>
    </source>
</reference>
<protein>
    <recommendedName>
        <fullName>Peptidyl-prolyl cis-trans isomerase B</fullName>
        <shortName>PPIase B</shortName>
        <ecNumber evidence="2">5.2.1.8</ecNumber>
    </recommendedName>
    <alternativeName>
        <fullName>CYP-S1</fullName>
    </alternativeName>
    <alternativeName>
        <fullName>Cyclophilin B</fullName>
    </alternativeName>
    <alternativeName>
        <fullName>Rotamase B</fullName>
    </alternativeName>
    <alternativeName>
        <fullName>S-cyclophilin</fullName>
        <shortName>SCYLP</shortName>
    </alternativeName>
</protein>
<feature type="signal peptide" evidence="1">
    <location>
        <begin position="1"/>
        <end position="33"/>
    </location>
</feature>
<feature type="chain" id="PRO_0000025481" description="Peptidyl-prolyl cis-trans isomerase B">
    <location>
        <begin position="34"/>
        <end position="216"/>
    </location>
</feature>
<feature type="domain" description="PPIase cyclophilin-type" evidence="5">
    <location>
        <begin position="47"/>
        <end position="204"/>
    </location>
</feature>
<feature type="short sequence motif" description="Prevents secretion from ER" evidence="1">
    <location>
        <begin position="213"/>
        <end position="216"/>
    </location>
</feature>
<feature type="modified residue" description="N6-succinyllysine" evidence="4">
    <location>
        <position position="84"/>
    </location>
</feature>
<feature type="modified residue" description="N6-acetyllysine" evidence="4">
    <location>
        <position position="165"/>
    </location>
</feature>
<feature type="modified residue" description="S-nitrosocysteine" evidence="4">
    <location>
        <position position="202"/>
    </location>
</feature>
<feature type="modified residue" description="N6-acetyllysine; alternate" evidence="3">
    <location>
        <position position="209"/>
    </location>
</feature>
<feature type="modified residue" description="N6-succinyllysine; alternate" evidence="3">
    <location>
        <position position="209"/>
    </location>
</feature>
<feature type="sequence conflict" description="In Ref. 1." evidence="7" ref="1">
    <original>DEPVGRVTFGLFGKTVP</original>
    <variation>GRTCRTSDLWTLWKDCS</variation>
    <location>
        <begin position="54"/>
        <end position="70"/>
    </location>
</feature>
<feature type="sequence conflict" description="In Ref. 1." evidence="7" ref="1">
    <original>RV</original>
    <variation>HM</variation>
    <location>
        <begin position="95"/>
        <end position="96"/>
    </location>
</feature>
<organism>
    <name type="scientific">Rattus norvegicus</name>
    <name type="common">Rat</name>
    <dbReference type="NCBI Taxonomy" id="10116"/>
    <lineage>
        <taxon>Eukaryota</taxon>
        <taxon>Metazoa</taxon>
        <taxon>Chordata</taxon>
        <taxon>Craniata</taxon>
        <taxon>Vertebrata</taxon>
        <taxon>Euteleostomi</taxon>
        <taxon>Mammalia</taxon>
        <taxon>Eutheria</taxon>
        <taxon>Euarchontoglires</taxon>
        <taxon>Glires</taxon>
        <taxon>Rodentia</taxon>
        <taxon>Myomorpha</taxon>
        <taxon>Muroidea</taxon>
        <taxon>Muridae</taxon>
        <taxon>Murinae</taxon>
        <taxon>Rattus</taxon>
    </lineage>
</organism>